<reference key="1">
    <citation type="submission" date="2003-03" db="EMBL/GenBank/DDBJ databases">
        <title>African swine fever virus genomes.</title>
        <authorList>
            <person name="Kutish G.F."/>
            <person name="Rock D.L."/>
        </authorList>
    </citation>
    <scope>NUCLEOTIDE SEQUENCE [GENOMIC DNA]</scope>
</reference>
<name>VFB66_ASFP4</name>
<evidence type="ECO:0000255" key="1"/>
<evidence type="ECO:0000305" key="2"/>
<dbReference type="EMBL" id="AY261363">
    <property type="status" value="NOT_ANNOTATED_CDS"/>
    <property type="molecule type" value="Genomic_DNA"/>
</dbReference>
<dbReference type="Proteomes" id="UP000000859">
    <property type="component" value="Segment"/>
</dbReference>
<dbReference type="GO" id="GO:0033644">
    <property type="term" value="C:host cell membrane"/>
    <property type="evidence" value="ECO:0007669"/>
    <property type="project" value="UniProtKB-SubCell"/>
</dbReference>
<dbReference type="GO" id="GO:0016020">
    <property type="term" value="C:membrane"/>
    <property type="evidence" value="ECO:0007669"/>
    <property type="project" value="UniProtKB-KW"/>
</dbReference>
<feature type="signal peptide" evidence="1">
    <location>
        <begin position="1"/>
        <end position="20"/>
    </location>
</feature>
<feature type="chain" id="PRO_0000373754" description="Transmembrane protein B66L">
    <location>
        <begin position="21"/>
        <end position="66"/>
    </location>
</feature>
<feature type="topological domain" description="Extracellular" evidence="1">
    <location>
        <begin position="21"/>
        <end position="40"/>
    </location>
</feature>
<feature type="transmembrane region" description="Helical" evidence="1">
    <location>
        <begin position="41"/>
        <end position="61"/>
    </location>
</feature>
<feature type="topological domain" description="Cytoplasmic" evidence="1">
    <location>
        <begin position="62"/>
        <end position="66"/>
    </location>
</feature>
<proteinExistence type="inferred from homology"/>
<sequence length="66" mass="7609">MDIKRALILFLLFLVVLSNAFVDYIISNFNHAVTCRKPTYFGIVLQGIFLVILFSIVDYLINENIL</sequence>
<gene>
    <name type="ordered locus">Pret-099</name>
</gene>
<protein>
    <recommendedName>
        <fullName>Transmembrane protein B66L</fullName>
        <shortName>pB66L</shortName>
    </recommendedName>
</protein>
<keyword id="KW-1043">Host membrane</keyword>
<keyword id="KW-0472">Membrane</keyword>
<keyword id="KW-0732">Signal</keyword>
<keyword id="KW-0812">Transmembrane</keyword>
<keyword id="KW-1133">Transmembrane helix</keyword>
<organism>
    <name type="scientific">African swine fever virus (isolate Tick/South Africa/Pretoriuskop Pr4/1996)</name>
    <name type="common">ASFV</name>
    <dbReference type="NCBI Taxonomy" id="561443"/>
    <lineage>
        <taxon>Viruses</taxon>
        <taxon>Varidnaviria</taxon>
        <taxon>Bamfordvirae</taxon>
        <taxon>Nucleocytoviricota</taxon>
        <taxon>Pokkesviricetes</taxon>
        <taxon>Asfuvirales</taxon>
        <taxon>Asfarviridae</taxon>
        <taxon>Asfivirus</taxon>
        <taxon>African swine fever virus</taxon>
    </lineage>
</organism>
<accession>P0CAM2</accession>
<comment type="subcellular location">
    <subcellularLocation>
        <location evidence="2">Host membrane</location>
        <topology evidence="2">Single-pass type I membrane protein</topology>
    </subcellularLocation>
</comment>
<comment type="similarity">
    <text evidence="2">Belongs to the asfivirus B66L family.</text>
</comment>
<organismHost>
    <name type="scientific">Ornithodoros</name>
    <name type="common">relapsing fever ticks</name>
    <dbReference type="NCBI Taxonomy" id="6937"/>
</organismHost>
<organismHost>
    <name type="scientific">Phacochoerus aethiopicus</name>
    <name type="common">Warthog</name>
    <dbReference type="NCBI Taxonomy" id="85517"/>
</organismHost>
<organismHost>
    <name type="scientific">Phacochoerus africanus</name>
    <name type="common">Warthog</name>
    <dbReference type="NCBI Taxonomy" id="41426"/>
</organismHost>
<organismHost>
    <name type="scientific">Potamochoerus larvatus</name>
    <name type="common">Bushpig</name>
    <dbReference type="NCBI Taxonomy" id="273792"/>
</organismHost>
<organismHost>
    <name type="scientific">Sus scrofa</name>
    <name type="common">Pig</name>
    <dbReference type="NCBI Taxonomy" id="9823"/>
</organismHost>